<comment type="function">
    <text evidence="1">Is an aliphatic amidase with a restricted substrate specificity, as it only hydrolyzes formamide.</text>
</comment>
<comment type="catalytic activity">
    <reaction evidence="1">
        <text>formamide + H2O = formate + NH4(+)</text>
        <dbReference type="Rhea" id="RHEA:21948"/>
        <dbReference type="ChEBI" id="CHEBI:15377"/>
        <dbReference type="ChEBI" id="CHEBI:15740"/>
        <dbReference type="ChEBI" id="CHEBI:16397"/>
        <dbReference type="ChEBI" id="CHEBI:28938"/>
        <dbReference type="EC" id="3.5.1.49"/>
    </reaction>
</comment>
<comment type="similarity">
    <text evidence="1">Belongs to the carbon-nitrogen hydrolase superfamily. Aliphatic amidase family.</text>
</comment>
<evidence type="ECO:0000255" key="1">
    <source>
        <dbReference type="HAMAP-Rule" id="MF_01243"/>
    </source>
</evidence>
<evidence type="ECO:0000255" key="2">
    <source>
        <dbReference type="PROSITE-ProRule" id="PRU00054"/>
    </source>
</evidence>
<proteinExistence type="inferred from homology"/>
<accession>B7H6S5</accession>
<name>AMIF_BACC4</name>
<gene>
    <name evidence="1" type="primary">amiF</name>
    <name type="ordered locus">BCB4264_A4041</name>
</gene>
<organism>
    <name type="scientific">Bacillus cereus (strain B4264)</name>
    <dbReference type="NCBI Taxonomy" id="405532"/>
    <lineage>
        <taxon>Bacteria</taxon>
        <taxon>Bacillati</taxon>
        <taxon>Bacillota</taxon>
        <taxon>Bacilli</taxon>
        <taxon>Bacillales</taxon>
        <taxon>Bacillaceae</taxon>
        <taxon>Bacillus</taxon>
        <taxon>Bacillus cereus group</taxon>
    </lineage>
</organism>
<reference key="1">
    <citation type="submission" date="2008-10" db="EMBL/GenBank/DDBJ databases">
        <title>Genome sequence of Bacillus cereus B4264.</title>
        <authorList>
            <person name="Dodson R.J."/>
            <person name="Durkin A.S."/>
            <person name="Rosovitz M.J."/>
            <person name="Rasko D.A."/>
            <person name="Hoffmaster A."/>
            <person name="Ravel J."/>
            <person name="Sutton G."/>
        </authorList>
    </citation>
    <scope>NUCLEOTIDE SEQUENCE [LARGE SCALE GENOMIC DNA]</scope>
    <source>
        <strain>B4264</strain>
    </source>
</reference>
<keyword id="KW-0378">Hydrolase</keyword>
<dbReference type="EC" id="3.5.1.49" evidence="1"/>
<dbReference type="EMBL" id="CP001176">
    <property type="protein sequence ID" value="ACK59209.1"/>
    <property type="molecule type" value="Genomic_DNA"/>
</dbReference>
<dbReference type="RefSeq" id="WP_000535802.1">
    <property type="nucleotide sequence ID" value="NZ_VEHB01000002.1"/>
</dbReference>
<dbReference type="SMR" id="B7H6S5"/>
<dbReference type="KEGG" id="bcb:BCB4264_A4041"/>
<dbReference type="HOGENOM" id="CLU_071797_0_0_9"/>
<dbReference type="Proteomes" id="UP000007096">
    <property type="component" value="Chromosome"/>
</dbReference>
<dbReference type="GO" id="GO:0004328">
    <property type="term" value="F:formamidase activity"/>
    <property type="evidence" value="ECO:0007669"/>
    <property type="project" value="UniProtKB-UniRule"/>
</dbReference>
<dbReference type="GO" id="GO:0050126">
    <property type="term" value="F:N-carbamoylputrescine amidase activity"/>
    <property type="evidence" value="ECO:0007669"/>
    <property type="project" value="TreeGrafter"/>
</dbReference>
<dbReference type="GO" id="GO:0033388">
    <property type="term" value="P:putrescine biosynthetic process from arginine"/>
    <property type="evidence" value="ECO:0007669"/>
    <property type="project" value="TreeGrafter"/>
</dbReference>
<dbReference type="CDD" id="cd07565">
    <property type="entry name" value="aliphatic_amidase"/>
    <property type="match status" value="1"/>
</dbReference>
<dbReference type="Gene3D" id="3.60.110.10">
    <property type="entry name" value="Carbon-nitrogen hydrolase"/>
    <property type="match status" value="1"/>
</dbReference>
<dbReference type="HAMAP" id="MF_01243">
    <property type="entry name" value="Formamidase"/>
    <property type="match status" value="1"/>
</dbReference>
<dbReference type="InterPro" id="IPR050345">
    <property type="entry name" value="Aliph_Amidase/BUP"/>
</dbReference>
<dbReference type="InterPro" id="IPR003010">
    <property type="entry name" value="C-N_Hydrolase"/>
</dbReference>
<dbReference type="InterPro" id="IPR036526">
    <property type="entry name" value="C-N_Hydrolase_sf"/>
</dbReference>
<dbReference type="InterPro" id="IPR022843">
    <property type="entry name" value="Formamidase"/>
</dbReference>
<dbReference type="NCBIfam" id="NF009803">
    <property type="entry name" value="PRK13287.1"/>
    <property type="match status" value="1"/>
</dbReference>
<dbReference type="PANTHER" id="PTHR43674:SF15">
    <property type="entry name" value="FORMAMIDASE"/>
    <property type="match status" value="1"/>
</dbReference>
<dbReference type="PANTHER" id="PTHR43674">
    <property type="entry name" value="NITRILASE C965.09-RELATED"/>
    <property type="match status" value="1"/>
</dbReference>
<dbReference type="Pfam" id="PF00795">
    <property type="entry name" value="CN_hydrolase"/>
    <property type="match status" value="1"/>
</dbReference>
<dbReference type="SUPFAM" id="SSF56317">
    <property type="entry name" value="Carbon-nitrogen hydrolase"/>
    <property type="match status" value="1"/>
</dbReference>
<dbReference type="PROSITE" id="PS50263">
    <property type="entry name" value="CN_HYDROLASE"/>
    <property type="match status" value="1"/>
</dbReference>
<protein>
    <recommendedName>
        <fullName evidence="1">Formamidase</fullName>
        <ecNumber evidence="1">3.5.1.49</ecNumber>
    </recommendedName>
    <alternativeName>
        <fullName evidence="1">Formamide amidohydrolase</fullName>
    </alternativeName>
</protein>
<sequence length="332" mass="36767">MGSSGSMVKPISGFLTALIQYPVPVVESRADIDKQIQQIIKTIHSTKSGYPGLELIVFPEYSTQGLNTKKWTTEEFLCTVPGPETDLFAEACKESKVYGVFSIMEKNPDGGEPYNTAVIIDPQGEMILKYRKLNPWVPVEPWKAGDLGLPVCDGPGGSKLAVCICHDGMFPEVAREAAYKGANVLIRISGYSTQVSEQWMLTNRSNAWQNLMYTLSVNLAGYDGVFYYFGEGQVCNFDGTTLVQGHRNPWEIVTAEVYPELADQARLGWGLENNIYNLGSRGYVATPGGVKENPYTFVKDLAEGKYKVPWEDEIKVKDGSIYGYPVKKTIHS</sequence>
<feature type="chain" id="PRO_1000139812" description="Formamidase">
    <location>
        <begin position="1"/>
        <end position="332"/>
    </location>
</feature>
<feature type="domain" description="CN hydrolase" evidence="2">
    <location>
        <begin position="14"/>
        <end position="259"/>
    </location>
</feature>
<feature type="active site" description="Proton acceptor" evidence="1">
    <location>
        <position position="60"/>
    </location>
</feature>
<feature type="active site" description="Proton donor" evidence="1">
    <location>
        <position position="132"/>
    </location>
</feature>
<feature type="active site" description="Nucleophile" evidence="1">
    <location>
        <position position="165"/>
    </location>
</feature>